<feature type="chain" id="PRO_0000118207" description="NAD(P)H-quinone oxidoreductase subunit 5, chloroplastic">
    <location>
        <begin position="1"/>
        <end position="746"/>
    </location>
</feature>
<feature type="transmembrane region" description="Helical" evidence="2">
    <location>
        <begin position="9"/>
        <end position="29"/>
    </location>
</feature>
<feature type="transmembrane region" description="Helical" evidence="2">
    <location>
        <begin position="40"/>
        <end position="60"/>
    </location>
</feature>
<feature type="transmembrane region" description="Helical" evidence="2">
    <location>
        <begin position="89"/>
        <end position="109"/>
    </location>
</feature>
<feature type="transmembrane region" description="Helical" evidence="2">
    <location>
        <begin position="121"/>
        <end position="140"/>
    </location>
</feature>
<feature type="transmembrane region" description="Helical" evidence="2">
    <location>
        <begin position="147"/>
        <end position="167"/>
    </location>
</feature>
<feature type="transmembrane region" description="Helical" evidence="2">
    <location>
        <begin position="185"/>
        <end position="205"/>
    </location>
</feature>
<feature type="transmembrane region" description="Helical" evidence="2">
    <location>
        <begin position="219"/>
        <end position="239"/>
    </location>
</feature>
<feature type="transmembrane region" description="Helical" evidence="2">
    <location>
        <begin position="258"/>
        <end position="278"/>
    </location>
</feature>
<feature type="transmembrane region" description="Helical" evidence="2">
    <location>
        <begin position="280"/>
        <end position="300"/>
    </location>
</feature>
<feature type="transmembrane region" description="Helical" evidence="2">
    <location>
        <begin position="327"/>
        <end position="347"/>
    </location>
</feature>
<feature type="transmembrane region" description="Helical" evidence="2">
    <location>
        <begin position="354"/>
        <end position="374"/>
    </location>
</feature>
<feature type="transmembrane region" description="Helical" evidence="2">
    <location>
        <begin position="396"/>
        <end position="416"/>
    </location>
</feature>
<feature type="transmembrane region" description="Helical" evidence="2">
    <location>
        <begin position="425"/>
        <end position="445"/>
    </location>
</feature>
<feature type="transmembrane region" description="Helical" evidence="2">
    <location>
        <begin position="552"/>
        <end position="572"/>
    </location>
</feature>
<feature type="transmembrane region" description="Helical" evidence="2">
    <location>
        <begin position="606"/>
        <end position="626"/>
    </location>
</feature>
<feature type="transmembrane region" description="Helical" evidence="2">
    <location>
        <begin position="726"/>
        <end position="746"/>
    </location>
</feature>
<dbReference type="EC" id="7.1.1.-"/>
<dbReference type="EMBL" id="X51471">
    <property type="protein sequence ID" value="CAA35834.1"/>
    <property type="molecule type" value="Genomic_DNA"/>
</dbReference>
<dbReference type="EMBL" id="X14804">
    <property type="protein sequence ID" value="CAA32909.1"/>
    <property type="molecule type" value="Genomic_DNA"/>
</dbReference>
<dbReference type="EMBL" id="M36832">
    <property type="protein sequence ID" value="AAA84714.1"/>
    <property type="molecule type" value="Genomic_DNA"/>
</dbReference>
<dbReference type="PIR" id="S08494">
    <property type="entry name" value="S08494"/>
</dbReference>
<dbReference type="SMR" id="P15958"/>
<dbReference type="GO" id="GO:0009535">
    <property type="term" value="C:chloroplast thylakoid membrane"/>
    <property type="evidence" value="ECO:0007669"/>
    <property type="project" value="UniProtKB-SubCell"/>
</dbReference>
<dbReference type="GO" id="GO:0008137">
    <property type="term" value="F:NADH dehydrogenase (ubiquinone) activity"/>
    <property type="evidence" value="ECO:0007669"/>
    <property type="project" value="InterPro"/>
</dbReference>
<dbReference type="GO" id="GO:0048038">
    <property type="term" value="F:quinone binding"/>
    <property type="evidence" value="ECO:0007669"/>
    <property type="project" value="UniProtKB-KW"/>
</dbReference>
<dbReference type="GO" id="GO:0042773">
    <property type="term" value="P:ATP synthesis coupled electron transport"/>
    <property type="evidence" value="ECO:0007669"/>
    <property type="project" value="InterPro"/>
</dbReference>
<dbReference type="GO" id="GO:0015990">
    <property type="term" value="P:electron transport coupled proton transport"/>
    <property type="evidence" value="ECO:0007669"/>
    <property type="project" value="TreeGrafter"/>
</dbReference>
<dbReference type="Gene3D" id="1.20.5.2700">
    <property type="match status" value="1"/>
</dbReference>
<dbReference type="InterPro" id="IPR002128">
    <property type="entry name" value="NADH_UbQ_OxRdtase_chlpt_su5_C"/>
</dbReference>
<dbReference type="InterPro" id="IPR018393">
    <property type="entry name" value="NADHpl_OxRdtase_5_subgr"/>
</dbReference>
<dbReference type="InterPro" id="IPR001750">
    <property type="entry name" value="ND/Mrp_TM"/>
</dbReference>
<dbReference type="InterPro" id="IPR003945">
    <property type="entry name" value="NU5C-like"/>
</dbReference>
<dbReference type="InterPro" id="IPR001516">
    <property type="entry name" value="Proton_antipo_N"/>
</dbReference>
<dbReference type="NCBIfam" id="TIGR01974">
    <property type="entry name" value="NDH_I_L"/>
    <property type="match status" value="1"/>
</dbReference>
<dbReference type="NCBIfam" id="NF005141">
    <property type="entry name" value="PRK06590.1"/>
    <property type="match status" value="1"/>
</dbReference>
<dbReference type="PANTHER" id="PTHR42829">
    <property type="entry name" value="NADH-UBIQUINONE OXIDOREDUCTASE CHAIN 5"/>
    <property type="match status" value="1"/>
</dbReference>
<dbReference type="PANTHER" id="PTHR42829:SF2">
    <property type="entry name" value="NADH-UBIQUINONE OXIDOREDUCTASE CHAIN 5"/>
    <property type="match status" value="1"/>
</dbReference>
<dbReference type="Pfam" id="PF01010">
    <property type="entry name" value="Proton_antipo_C"/>
    <property type="match status" value="1"/>
</dbReference>
<dbReference type="Pfam" id="PF00361">
    <property type="entry name" value="Proton_antipo_M"/>
    <property type="match status" value="1"/>
</dbReference>
<dbReference type="Pfam" id="PF00662">
    <property type="entry name" value="Proton_antipo_N"/>
    <property type="match status" value="1"/>
</dbReference>
<dbReference type="PRINTS" id="PR01434">
    <property type="entry name" value="NADHDHGNASE5"/>
</dbReference>
<dbReference type="PRINTS" id="PR01435">
    <property type="entry name" value="NPOXDRDTASE5"/>
</dbReference>
<organism>
    <name type="scientific">Vicia faba</name>
    <name type="common">Broad bean</name>
    <name type="synonym">Faba vulgaris</name>
    <dbReference type="NCBI Taxonomy" id="3906"/>
    <lineage>
        <taxon>Eukaryota</taxon>
        <taxon>Viridiplantae</taxon>
        <taxon>Streptophyta</taxon>
        <taxon>Embryophyta</taxon>
        <taxon>Tracheophyta</taxon>
        <taxon>Spermatophyta</taxon>
        <taxon>Magnoliopsida</taxon>
        <taxon>eudicotyledons</taxon>
        <taxon>Gunneridae</taxon>
        <taxon>Pentapetalae</taxon>
        <taxon>rosids</taxon>
        <taxon>fabids</taxon>
        <taxon>Fabales</taxon>
        <taxon>Fabaceae</taxon>
        <taxon>Papilionoideae</taxon>
        <taxon>50 kb inversion clade</taxon>
        <taxon>NPAAA clade</taxon>
        <taxon>Hologalegina</taxon>
        <taxon>IRL clade</taxon>
        <taxon>Fabeae</taxon>
        <taxon>Vicia</taxon>
    </lineage>
</organism>
<gene>
    <name type="primary">ndhF</name>
</gene>
<name>NU5C_VICFA</name>
<proteinExistence type="inferred from homology"/>
<sequence length="746" mass="84768">MEYTHQSSWIIPFIPLPVPILIGVGLLLFPTATKNLRRMWAFPSIFLLTIVMIFSIDLSIQQIENSSIYQYVWSWTINNDLSLEFGYLIDSLTSIMSILITTVGILVLIYSDSYMSHDQGYLRFFTYMSFFNTSMLGLVTSSNLIQVYIFWELVGMCSYLLIGFWFTRPIAANACQKAFVTNRVGDFGLLLGILGFYWITGSLEFRDLFQIFKNLIYKNEVNILFVTLCALLLFCGSVAKSAQFPLHVWLPDAMEGPTPISALIHAATMVAAGIFLVARLLPLFIVIPSIMSGIALIGIITVVLGATLAIAQKDIKKNLAYSTMSQLGYMMLALGMGSYRAALFHLITHAYSKALLFLGSGSIIHSMEAIVGYSPDKSQNMVLMGGLTKHAPITKMSFLIGTLSLCGIPPFACFWSKDEILNDSWLYSPIFAIIACSTAGLTAFYMFRIYLLVFEGYLNVHFQNFNGKKNSSFYSISLWGKEEKKKLKKKIHLLGFLTMNNNERTSFFRERTYSHRINRNVKSIRRLFLDSTHFGTKNLPFFYPHESDNTMLFSMLVLVLFTFFVGSIGISFSQEGIDLDILSKLLIPSIDLLHQNSKNSVDWYEFFINATFSVSIAFFGLFIASFFYKPVFSSLQNLNLFNLFQKNVPKKIISDKIINILYDWSYNRGYIDAFFEVSLIASVRKLAKFNYFFDRQLIDGIPNGVGISNFFIGEAIKYVGGGRISSYIFFFVLIFLLICYYIYLFP</sequence>
<evidence type="ECO:0000250" key="1"/>
<evidence type="ECO:0000255" key="2"/>
<evidence type="ECO:0000305" key="3"/>
<comment type="function">
    <text evidence="1">NDH shuttles electrons from NAD(P)H:plastoquinone, via FMN and iron-sulfur (Fe-S) centers, to quinones in the photosynthetic chain and possibly in a chloroplast respiratory chain. The immediate electron acceptor for the enzyme in this species is believed to be plastoquinone. Couples the redox reaction to proton translocation, and thus conserves the redox energy in a proton gradient (By similarity).</text>
</comment>
<comment type="catalytic activity">
    <reaction>
        <text>a plastoquinone + NADH + (n+1) H(+)(in) = a plastoquinol + NAD(+) + n H(+)(out)</text>
        <dbReference type="Rhea" id="RHEA:42608"/>
        <dbReference type="Rhea" id="RHEA-COMP:9561"/>
        <dbReference type="Rhea" id="RHEA-COMP:9562"/>
        <dbReference type="ChEBI" id="CHEBI:15378"/>
        <dbReference type="ChEBI" id="CHEBI:17757"/>
        <dbReference type="ChEBI" id="CHEBI:57540"/>
        <dbReference type="ChEBI" id="CHEBI:57945"/>
        <dbReference type="ChEBI" id="CHEBI:62192"/>
    </reaction>
</comment>
<comment type="catalytic activity">
    <reaction>
        <text>a plastoquinone + NADPH + (n+1) H(+)(in) = a plastoquinol + NADP(+) + n H(+)(out)</text>
        <dbReference type="Rhea" id="RHEA:42612"/>
        <dbReference type="Rhea" id="RHEA-COMP:9561"/>
        <dbReference type="Rhea" id="RHEA-COMP:9562"/>
        <dbReference type="ChEBI" id="CHEBI:15378"/>
        <dbReference type="ChEBI" id="CHEBI:17757"/>
        <dbReference type="ChEBI" id="CHEBI:57783"/>
        <dbReference type="ChEBI" id="CHEBI:58349"/>
        <dbReference type="ChEBI" id="CHEBI:62192"/>
    </reaction>
</comment>
<comment type="subunit">
    <text evidence="1">NDH is composed of at least 16 different subunits, 5 of which are encoded in the nucleus.</text>
</comment>
<comment type="subcellular location">
    <subcellularLocation>
        <location evidence="1">Plastid</location>
        <location evidence="1">Chloroplast thylakoid membrane</location>
        <topology evidence="1">Multi-pass membrane protein</topology>
    </subcellularLocation>
</comment>
<comment type="similarity">
    <text evidence="3">Belongs to the complex I subunit 5 family.</text>
</comment>
<protein>
    <recommendedName>
        <fullName>NAD(P)H-quinone oxidoreductase subunit 5, chloroplastic</fullName>
        <ecNumber>7.1.1.-</ecNumber>
    </recommendedName>
    <alternativeName>
        <fullName>NAD(P)H dehydrogenase subunit 5</fullName>
    </alternativeName>
    <alternativeName>
        <fullName>NADH-plastoquinone oxidoreductase subunit 5</fullName>
    </alternativeName>
</protein>
<geneLocation type="chloroplast"/>
<accession>P15958</accession>
<reference key="1">
    <citation type="journal article" date="1990" name="Nucleic Acids Res.">
        <title>Sequence of the trnH gene and the inverted repeat structure deletion site of the broad bean chloroplast genome.</title>
        <authorList>
            <person name="Herdenberger F."/>
            <person name="Pillay D.T.N."/>
            <person name="Steinmetz A."/>
        </authorList>
    </citation>
    <scope>NUCLEOTIDE SEQUENCE [GENOMIC DNA]</scope>
</reference>
<reference key="2">
    <citation type="journal article" date="1988" name="Curr. Genet.">
        <title>Organization and nucleotide sequence of the broad bean chloroplast genes trnL-UAG, ndhF and two unidentified open reading frames.</title>
        <authorList>
            <person name="Herdenberger F."/>
            <person name="Weil J.H."/>
            <person name="Steinmetz A."/>
        </authorList>
    </citation>
    <scope>NUCLEOTIDE SEQUENCE [GENOMIC DNA]</scope>
</reference>
<keyword id="KW-0150">Chloroplast</keyword>
<keyword id="KW-0472">Membrane</keyword>
<keyword id="KW-0520">NAD</keyword>
<keyword id="KW-0521">NADP</keyword>
<keyword id="KW-0934">Plastid</keyword>
<keyword id="KW-0618">Plastoquinone</keyword>
<keyword id="KW-0874">Quinone</keyword>
<keyword id="KW-0793">Thylakoid</keyword>
<keyword id="KW-1278">Translocase</keyword>
<keyword id="KW-0812">Transmembrane</keyword>
<keyword id="KW-1133">Transmembrane helix</keyword>
<keyword id="KW-0813">Transport</keyword>